<feature type="chain" id="PRO_1000126829" description="Large ribosomal subunit protein bL31B">
    <location>
        <begin position="1"/>
        <end position="86"/>
    </location>
</feature>
<evidence type="ECO:0000255" key="1">
    <source>
        <dbReference type="HAMAP-Rule" id="MF_00502"/>
    </source>
</evidence>
<evidence type="ECO:0000305" key="2"/>
<accession>B2U9R5</accession>
<organism>
    <name type="scientific">Ralstonia pickettii (strain 12J)</name>
    <dbReference type="NCBI Taxonomy" id="402626"/>
    <lineage>
        <taxon>Bacteria</taxon>
        <taxon>Pseudomonadati</taxon>
        <taxon>Pseudomonadota</taxon>
        <taxon>Betaproteobacteria</taxon>
        <taxon>Burkholderiales</taxon>
        <taxon>Burkholderiaceae</taxon>
        <taxon>Ralstonia</taxon>
    </lineage>
</organism>
<dbReference type="EMBL" id="CP001068">
    <property type="protein sequence ID" value="ACD26173.1"/>
    <property type="molecule type" value="Genomic_DNA"/>
</dbReference>
<dbReference type="SMR" id="B2U9R5"/>
<dbReference type="STRING" id="402626.Rpic_1025"/>
<dbReference type="KEGG" id="rpi:Rpic_1025"/>
<dbReference type="eggNOG" id="COG0254">
    <property type="taxonomic scope" value="Bacteria"/>
</dbReference>
<dbReference type="HOGENOM" id="CLU_114306_2_2_4"/>
<dbReference type="GO" id="GO:1990904">
    <property type="term" value="C:ribonucleoprotein complex"/>
    <property type="evidence" value="ECO:0007669"/>
    <property type="project" value="UniProtKB-KW"/>
</dbReference>
<dbReference type="GO" id="GO:0005840">
    <property type="term" value="C:ribosome"/>
    <property type="evidence" value="ECO:0007669"/>
    <property type="project" value="UniProtKB-KW"/>
</dbReference>
<dbReference type="GO" id="GO:0003735">
    <property type="term" value="F:structural constituent of ribosome"/>
    <property type="evidence" value="ECO:0007669"/>
    <property type="project" value="InterPro"/>
</dbReference>
<dbReference type="GO" id="GO:0006412">
    <property type="term" value="P:translation"/>
    <property type="evidence" value="ECO:0007669"/>
    <property type="project" value="UniProtKB-UniRule"/>
</dbReference>
<dbReference type="Gene3D" id="4.10.830.30">
    <property type="entry name" value="Ribosomal protein L31"/>
    <property type="match status" value="1"/>
</dbReference>
<dbReference type="HAMAP" id="MF_00502">
    <property type="entry name" value="Ribosomal_bL31_2"/>
    <property type="match status" value="1"/>
</dbReference>
<dbReference type="InterPro" id="IPR034704">
    <property type="entry name" value="Ribosomal_bL28/bL31-like_sf"/>
</dbReference>
<dbReference type="InterPro" id="IPR002150">
    <property type="entry name" value="Ribosomal_bL31"/>
</dbReference>
<dbReference type="InterPro" id="IPR027493">
    <property type="entry name" value="Ribosomal_bL31_B"/>
</dbReference>
<dbReference type="InterPro" id="IPR042105">
    <property type="entry name" value="Ribosomal_bL31_sf"/>
</dbReference>
<dbReference type="NCBIfam" id="TIGR00105">
    <property type="entry name" value="L31"/>
    <property type="match status" value="1"/>
</dbReference>
<dbReference type="NCBIfam" id="NF002462">
    <property type="entry name" value="PRK01678.1"/>
    <property type="match status" value="1"/>
</dbReference>
<dbReference type="PANTHER" id="PTHR33280">
    <property type="entry name" value="50S RIBOSOMAL PROTEIN L31, CHLOROPLASTIC"/>
    <property type="match status" value="1"/>
</dbReference>
<dbReference type="PANTHER" id="PTHR33280:SF1">
    <property type="entry name" value="LARGE RIBOSOMAL SUBUNIT PROTEIN BL31C"/>
    <property type="match status" value="1"/>
</dbReference>
<dbReference type="Pfam" id="PF01197">
    <property type="entry name" value="Ribosomal_L31"/>
    <property type="match status" value="1"/>
</dbReference>
<dbReference type="PRINTS" id="PR01249">
    <property type="entry name" value="RIBOSOMALL31"/>
</dbReference>
<dbReference type="SUPFAM" id="SSF143800">
    <property type="entry name" value="L28p-like"/>
    <property type="match status" value="1"/>
</dbReference>
<dbReference type="PROSITE" id="PS01143">
    <property type="entry name" value="RIBOSOMAL_L31"/>
    <property type="match status" value="1"/>
</dbReference>
<gene>
    <name evidence="1" type="primary">rpmE2</name>
    <name type="ordered locus">Rpic_1025</name>
</gene>
<name>RL31B_RALPJ</name>
<comment type="subunit">
    <text evidence="1">Part of the 50S ribosomal subunit.</text>
</comment>
<comment type="similarity">
    <text evidence="1">Belongs to the bacterial ribosomal protein bL31 family. Type B subfamily.</text>
</comment>
<reference key="1">
    <citation type="submission" date="2008-05" db="EMBL/GenBank/DDBJ databases">
        <title>Complete sequence of chromosome 1 of Ralstonia pickettii 12J.</title>
        <authorList>
            <person name="Lucas S."/>
            <person name="Copeland A."/>
            <person name="Lapidus A."/>
            <person name="Glavina del Rio T."/>
            <person name="Dalin E."/>
            <person name="Tice H."/>
            <person name="Bruce D."/>
            <person name="Goodwin L."/>
            <person name="Pitluck S."/>
            <person name="Meincke L."/>
            <person name="Brettin T."/>
            <person name="Detter J.C."/>
            <person name="Han C."/>
            <person name="Kuske C.R."/>
            <person name="Schmutz J."/>
            <person name="Larimer F."/>
            <person name="Land M."/>
            <person name="Hauser L."/>
            <person name="Kyrpides N."/>
            <person name="Mikhailova N."/>
            <person name="Marsh T."/>
            <person name="Richardson P."/>
        </authorList>
    </citation>
    <scope>NUCLEOTIDE SEQUENCE [LARGE SCALE GENOMIC DNA]</scope>
    <source>
        <strain>12J</strain>
    </source>
</reference>
<sequence length="86" mass="9846">MKEGIHPNYREVVFQDMSSDFKFITRSTIQTKEMITLDGKEYPLAKIEVSSESHPFYTGQQKVLDTAGRVEKFRNKFGSKIGKAAK</sequence>
<proteinExistence type="inferred from homology"/>
<keyword id="KW-0687">Ribonucleoprotein</keyword>
<keyword id="KW-0689">Ribosomal protein</keyword>
<protein>
    <recommendedName>
        <fullName evidence="1">Large ribosomal subunit protein bL31B</fullName>
    </recommendedName>
    <alternativeName>
        <fullName evidence="2">50S ribosomal protein L31 type B</fullName>
    </alternativeName>
</protein>